<feature type="chain" id="PRO_0000312613" description="L-arabinose isomerase">
    <location>
        <begin position="1"/>
        <end position="501"/>
    </location>
</feature>
<feature type="binding site" evidence="1">
    <location>
        <position position="306"/>
    </location>
    <ligand>
        <name>Mn(2+)</name>
        <dbReference type="ChEBI" id="CHEBI:29035"/>
    </ligand>
</feature>
<feature type="binding site" evidence="1">
    <location>
        <position position="333"/>
    </location>
    <ligand>
        <name>Mn(2+)</name>
        <dbReference type="ChEBI" id="CHEBI:29035"/>
    </ligand>
</feature>
<feature type="binding site" evidence="1">
    <location>
        <position position="350"/>
    </location>
    <ligand>
        <name>Mn(2+)</name>
        <dbReference type="ChEBI" id="CHEBI:29035"/>
    </ligand>
</feature>
<feature type="binding site" evidence="1">
    <location>
        <position position="449"/>
    </location>
    <ligand>
        <name>Mn(2+)</name>
        <dbReference type="ChEBI" id="CHEBI:29035"/>
    </ligand>
</feature>
<organism>
    <name type="scientific">Mycolicibacterium smegmatis (strain ATCC 700084 / mc(2)155)</name>
    <name type="common">Mycobacterium smegmatis</name>
    <dbReference type="NCBI Taxonomy" id="246196"/>
    <lineage>
        <taxon>Bacteria</taxon>
        <taxon>Bacillati</taxon>
        <taxon>Actinomycetota</taxon>
        <taxon>Actinomycetes</taxon>
        <taxon>Mycobacteriales</taxon>
        <taxon>Mycobacteriaceae</taxon>
        <taxon>Mycolicibacterium</taxon>
    </lineage>
</organism>
<protein>
    <recommendedName>
        <fullName evidence="1">L-arabinose isomerase</fullName>
        <ecNumber evidence="1">5.3.1.4</ecNumber>
    </recommendedName>
</protein>
<name>ARAA_MYCS2</name>
<proteinExistence type="inferred from homology"/>
<keyword id="KW-0054">Arabinose catabolism</keyword>
<keyword id="KW-0119">Carbohydrate metabolism</keyword>
<keyword id="KW-0413">Isomerase</keyword>
<keyword id="KW-0464">Manganese</keyword>
<keyword id="KW-0479">Metal-binding</keyword>
<keyword id="KW-1185">Reference proteome</keyword>
<comment type="function">
    <text evidence="1">Catalyzes the conversion of L-arabinose to L-ribulose.</text>
</comment>
<comment type="catalytic activity">
    <reaction evidence="1">
        <text>beta-L-arabinopyranose = L-ribulose</text>
        <dbReference type="Rhea" id="RHEA:14821"/>
        <dbReference type="ChEBI" id="CHEBI:16880"/>
        <dbReference type="ChEBI" id="CHEBI:40886"/>
        <dbReference type="EC" id="5.3.1.4"/>
    </reaction>
</comment>
<comment type="cofactor">
    <cofactor evidence="1">
        <name>Mn(2+)</name>
        <dbReference type="ChEBI" id="CHEBI:29035"/>
    </cofactor>
    <text evidence="1">Binds 1 Mn(2+) ion per subunit.</text>
</comment>
<comment type="pathway">
    <text evidence="1">Carbohydrate degradation; L-arabinose degradation via L-ribulose; D-xylulose 5-phosphate from L-arabinose (bacterial route): step 1/3.</text>
</comment>
<comment type="similarity">
    <text evidence="1">Belongs to the arabinose isomerase family.</text>
</comment>
<accession>A0QT53</accession>
<accession>I7FYN6</accession>
<dbReference type="EC" id="5.3.1.4" evidence="1"/>
<dbReference type="EMBL" id="CP000480">
    <property type="protein sequence ID" value="ABK71852.1"/>
    <property type="molecule type" value="Genomic_DNA"/>
</dbReference>
<dbReference type="EMBL" id="CP001663">
    <property type="protein sequence ID" value="AFP38147.1"/>
    <property type="molecule type" value="Genomic_DNA"/>
</dbReference>
<dbReference type="RefSeq" id="WP_011727846.1">
    <property type="nucleotide sequence ID" value="NZ_SIJM01000023.1"/>
</dbReference>
<dbReference type="RefSeq" id="YP_886091.1">
    <property type="nucleotide sequence ID" value="NC_008596.1"/>
</dbReference>
<dbReference type="SMR" id="A0QT53"/>
<dbReference type="STRING" id="246196.MSMEG_1715"/>
<dbReference type="PaxDb" id="246196-MSMEI_1675"/>
<dbReference type="GeneID" id="93456547"/>
<dbReference type="KEGG" id="msb:LJ00_08565"/>
<dbReference type="KEGG" id="msg:MSMEI_1675"/>
<dbReference type="KEGG" id="msm:MSMEG_1715"/>
<dbReference type="PATRIC" id="fig|246196.19.peg.1699"/>
<dbReference type="eggNOG" id="COG2160">
    <property type="taxonomic scope" value="Bacteria"/>
</dbReference>
<dbReference type="OrthoDB" id="9765600at2"/>
<dbReference type="UniPathway" id="UPA00145">
    <property type="reaction ID" value="UER00565"/>
</dbReference>
<dbReference type="Proteomes" id="UP000000757">
    <property type="component" value="Chromosome"/>
</dbReference>
<dbReference type="Proteomes" id="UP000006158">
    <property type="component" value="Chromosome"/>
</dbReference>
<dbReference type="GO" id="GO:0005829">
    <property type="term" value="C:cytosol"/>
    <property type="evidence" value="ECO:0007669"/>
    <property type="project" value="TreeGrafter"/>
</dbReference>
<dbReference type="GO" id="GO:0008733">
    <property type="term" value="F:L-arabinose isomerase activity"/>
    <property type="evidence" value="ECO:0007669"/>
    <property type="project" value="UniProtKB-UniRule"/>
</dbReference>
<dbReference type="GO" id="GO:0030145">
    <property type="term" value="F:manganese ion binding"/>
    <property type="evidence" value="ECO:0007669"/>
    <property type="project" value="UniProtKB-UniRule"/>
</dbReference>
<dbReference type="GO" id="GO:0019569">
    <property type="term" value="P:L-arabinose catabolic process to xylulose 5-phosphate"/>
    <property type="evidence" value="ECO:0007669"/>
    <property type="project" value="UniProtKB-UniRule"/>
</dbReference>
<dbReference type="CDD" id="cd03557">
    <property type="entry name" value="L-arabinose_isomerase"/>
    <property type="match status" value="1"/>
</dbReference>
<dbReference type="Gene3D" id="3.40.50.10940">
    <property type="match status" value="1"/>
</dbReference>
<dbReference type="HAMAP" id="MF_00519">
    <property type="entry name" value="Arabinose_Isome"/>
    <property type="match status" value="1"/>
</dbReference>
<dbReference type="InterPro" id="IPR024664">
    <property type="entry name" value="Ara_Isoase_C"/>
</dbReference>
<dbReference type="InterPro" id="IPR055390">
    <property type="entry name" value="AraA_central"/>
</dbReference>
<dbReference type="InterPro" id="IPR055389">
    <property type="entry name" value="AraA_N"/>
</dbReference>
<dbReference type="InterPro" id="IPR038583">
    <property type="entry name" value="AraA_N_sf"/>
</dbReference>
<dbReference type="InterPro" id="IPR004216">
    <property type="entry name" value="Fuc/Ara_isomerase_C"/>
</dbReference>
<dbReference type="InterPro" id="IPR009015">
    <property type="entry name" value="Fucose_isomerase_N/cen_sf"/>
</dbReference>
<dbReference type="InterPro" id="IPR003762">
    <property type="entry name" value="Lara_isomerase"/>
</dbReference>
<dbReference type="NCBIfam" id="NF002795">
    <property type="entry name" value="PRK02929.1"/>
    <property type="match status" value="1"/>
</dbReference>
<dbReference type="PANTHER" id="PTHR38464">
    <property type="entry name" value="L-ARABINOSE ISOMERASE"/>
    <property type="match status" value="1"/>
</dbReference>
<dbReference type="PANTHER" id="PTHR38464:SF1">
    <property type="entry name" value="L-ARABINOSE ISOMERASE"/>
    <property type="match status" value="1"/>
</dbReference>
<dbReference type="Pfam" id="PF24856">
    <property type="entry name" value="AraA_central"/>
    <property type="match status" value="1"/>
</dbReference>
<dbReference type="Pfam" id="PF02610">
    <property type="entry name" value="AraA_N"/>
    <property type="match status" value="1"/>
</dbReference>
<dbReference type="Pfam" id="PF11762">
    <property type="entry name" value="Arabinose_Iso_C"/>
    <property type="match status" value="1"/>
</dbReference>
<dbReference type="PIRSF" id="PIRSF001478">
    <property type="entry name" value="L-ara_isomerase"/>
    <property type="match status" value="1"/>
</dbReference>
<dbReference type="SUPFAM" id="SSF50443">
    <property type="entry name" value="FucI/AraA C-terminal domain-like"/>
    <property type="match status" value="1"/>
</dbReference>
<dbReference type="SUPFAM" id="SSF53743">
    <property type="entry name" value="FucI/AraA N-terminal and middle domains"/>
    <property type="match status" value="1"/>
</dbReference>
<reference key="1">
    <citation type="submission" date="2006-10" db="EMBL/GenBank/DDBJ databases">
        <authorList>
            <person name="Fleischmann R.D."/>
            <person name="Dodson R.J."/>
            <person name="Haft D.H."/>
            <person name="Merkel J.S."/>
            <person name="Nelson W.C."/>
            <person name="Fraser C.M."/>
        </authorList>
    </citation>
    <scope>NUCLEOTIDE SEQUENCE [LARGE SCALE GENOMIC DNA]</scope>
    <source>
        <strain>ATCC 700084 / mc(2)155</strain>
    </source>
</reference>
<reference key="2">
    <citation type="journal article" date="2007" name="Genome Biol.">
        <title>Interrupted coding sequences in Mycobacterium smegmatis: authentic mutations or sequencing errors?</title>
        <authorList>
            <person name="Deshayes C."/>
            <person name="Perrodou E."/>
            <person name="Gallien S."/>
            <person name="Euphrasie D."/>
            <person name="Schaeffer C."/>
            <person name="Van-Dorsselaer A."/>
            <person name="Poch O."/>
            <person name="Lecompte O."/>
            <person name="Reyrat J.-M."/>
        </authorList>
    </citation>
    <scope>NUCLEOTIDE SEQUENCE [LARGE SCALE GENOMIC DNA]</scope>
    <source>
        <strain>ATCC 700084 / mc(2)155</strain>
    </source>
</reference>
<reference key="3">
    <citation type="journal article" date="2009" name="Genome Res.">
        <title>Ortho-proteogenomics: multiple proteomes investigation through orthology and a new MS-based protocol.</title>
        <authorList>
            <person name="Gallien S."/>
            <person name="Perrodou E."/>
            <person name="Carapito C."/>
            <person name="Deshayes C."/>
            <person name="Reyrat J.-M."/>
            <person name="Van Dorsselaer A."/>
            <person name="Poch O."/>
            <person name="Schaeffer C."/>
            <person name="Lecompte O."/>
        </authorList>
    </citation>
    <scope>NUCLEOTIDE SEQUENCE [LARGE SCALE GENOMIC DNA]</scope>
    <source>
        <strain>ATCC 700084 / mc(2)155</strain>
    </source>
</reference>
<evidence type="ECO:0000255" key="1">
    <source>
        <dbReference type="HAMAP-Rule" id="MF_00519"/>
    </source>
</evidence>
<gene>
    <name evidence="1" type="primary">araA</name>
    <name type="ordered locus">MSMEG_1715</name>
    <name type="ordered locus">MSMEI_1675</name>
</gene>
<sequence>MAEHFTDEEIWFVTGSQSLYGQEILDQVAEQSRALAERLDASADLPVAVRWKPVVTTSEAILDVLRDASSSPQCVGVITWMHTFSPAKMWIRGLSALQKPMLHLHTQFGVEIPWDTIDMDFMNLNQAAHGDREFGYIQTRLSVPRTTVAGHVGDPRTTARIGSWMRAALGAAELRSLRIARFGDNMRDVAVTEGDKVEAESHFGVSVNTYSVNDLAKAVYDVSDPEIDKLVQEYEDTYAVAEELRRGGERHASLREGARIELGLRHFLADGFGAFTTNFEDLGDLRQLPGLAVQRLMADGFGFGAEGDWKTSAMVRTVKTMGVGLPGGTSFMEDYTYDLTPGSERILGAHMLEVCPSIAGQTPSLEVHPLGIGNREDPVRLRFTAAPGSGVVLGICDMGSRFRLVANHVTVVEPSAPLPNLPVACAVWEPEPSWSTSTEAWLMAGGPHHTVLTTAVSPTTLDDFATITGTELLQIDQHTTPREFQREMRWNAVYHHIAAGL</sequence>